<keyword id="KW-0963">Cytoplasm</keyword>
<keyword id="KW-0489">Methyltransferase</keyword>
<keyword id="KW-1185">Reference proteome</keyword>
<keyword id="KW-0698">rRNA processing</keyword>
<keyword id="KW-0949">S-adenosyl-L-methionine</keyword>
<keyword id="KW-0808">Transferase</keyword>
<comment type="function">
    <text evidence="1">Specifically methylates the N4 position of cytidine in position 1402 (C1402) of 16S rRNA.</text>
</comment>
<comment type="catalytic activity">
    <reaction evidence="1">
        <text>cytidine(1402) in 16S rRNA + S-adenosyl-L-methionine = N(4)-methylcytidine(1402) in 16S rRNA + S-adenosyl-L-homocysteine + H(+)</text>
        <dbReference type="Rhea" id="RHEA:42928"/>
        <dbReference type="Rhea" id="RHEA-COMP:10286"/>
        <dbReference type="Rhea" id="RHEA-COMP:10287"/>
        <dbReference type="ChEBI" id="CHEBI:15378"/>
        <dbReference type="ChEBI" id="CHEBI:57856"/>
        <dbReference type="ChEBI" id="CHEBI:59789"/>
        <dbReference type="ChEBI" id="CHEBI:74506"/>
        <dbReference type="ChEBI" id="CHEBI:82748"/>
        <dbReference type="EC" id="2.1.1.199"/>
    </reaction>
</comment>
<comment type="subcellular location">
    <subcellularLocation>
        <location evidence="1">Cytoplasm</location>
    </subcellularLocation>
</comment>
<comment type="similarity">
    <text evidence="1">Belongs to the methyltransferase superfamily. RsmH family.</text>
</comment>
<sequence length="324" mass="35564">MESKKLIPEEVHTSVLLNEVIEWLAPKPGGRYLDGTLGMAGHSSAILKIAGEGAELAGLDRDEQALELAGERLAPFGDRAHRFHLAFSKFEAALDELGWDTVDGVVLDLGVSSLHLDHAERGFSFIKDGPLDMRMDPAGGMPPASSIVNKGSYSDLNRILKLYGEEPLASKITKAIIAAREEEKITTTLQLASIVEKAYPAKRRALSRTHPATKTFQGLRIAVNSELEELKTFLDRIPERLSPGARVAIISFHSLEDRIVKKTFKAQSQSCDCPPMQPICTCGKVKLMNVLTRKPVLPTEEEMKVNTRSRSAKLRVAERTGEDG</sequence>
<proteinExistence type="inferred from homology"/>
<reference key="1">
    <citation type="submission" date="2009-06" db="EMBL/GenBank/DDBJ databases">
        <title>Complete sequence of Desulfovibrio salexigens DSM 2638.</title>
        <authorList>
            <consortium name="US DOE Joint Genome Institute"/>
            <person name="Lucas S."/>
            <person name="Copeland A."/>
            <person name="Lapidus A."/>
            <person name="Glavina del Rio T."/>
            <person name="Tice H."/>
            <person name="Bruce D."/>
            <person name="Goodwin L."/>
            <person name="Pitluck S."/>
            <person name="Munk A.C."/>
            <person name="Brettin T."/>
            <person name="Detter J.C."/>
            <person name="Han C."/>
            <person name="Tapia R."/>
            <person name="Larimer F."/>
            <person name="Land M."/>
            <person name="Hauser L."/>
            <person name="Kyrpides N."/>
            <person name="Anderson I."/>
            <person name="Wall J.D."/>
            <person name="Arkin A.P."/>
            <person name="Dehal P."/>
            <person name="Chivian D."/>
            <person name="Giles B."/>
            <person name="Hazen T.C."/>
        </authorList>
    </citation>
    <scope>NUCLEOTIDE SEQUENCE [LARGE SCALE GENOMIC DNA]</scope>
    <source>
        <strain>ATCC 14822 / DSM 2638 / NCIMB 8403 / VKM B-1763</strain>
    </source>
</reference>
<dbReference type="EC" id="2.1.1.199" evidence="1"/>
<dbReference type="EMBL" id="CP001649">
    <property type="protein sequence ID" value="ACS78765.1"/>
    <property type="molecule type" value="Genomic_DNA"/>
</dbReference>
<dbReference type="RefSeq" id="WP_015850584.1">
    <property type="nucleotide sequence ID" value="NC_012881.1"/>
</dbReference>
<dbReference type="SMR" id="C6BYH4"/>
<dbReference type="STRING" id="526222.Desal_0699"/>
<dbReference type="KEGG" id="dsa:Desal_0699"/>
<dbReference type="eggNOG" id="COG0275">
    <property type="taxonomic scope" value="Bacteria"/>
</dbReference>
<dbReference type="HOGENOM" id="CLU_038422_2_0_7"/>
<dbReference type="OrthoDB" id="9806637at2"/>
<dbReference type="Proteomes" id="UP000002601">
    <property type="component" value="Chromosome"/>
</dbReference>
<dbReference type="GO" id="GO:0005737">
    <property type="term" value="C:cytoplasm"/>
    <property type="evidence" value="ECO:0007669"/>
    <property type="project" value="UniProtKB-SubCell"/>
</dbReference>
<dbReference type="GO" id="GO:0071424">
    <property type="term" value="F:rRNA (cytosine-N4-)-methyltransferase activity"/>
    <property type="evidence" value="ECO:0007669"/>
    <property type="project" value="UniProtKB-UniRule"/>
</dbReference>
<dbReference type="GO" id="GO:0070475">
    <property type="term" value="P:rRNA base methylation"/>
    <property type="evidence" value="ECO:0007669"/>
    <property type="project" value="UniProtKB-UniRule"/>
</dbReference>
<dbReference type="Gene3D" id="1.10.150.170">
    <property type="entry name" value="Putative methyltransferase TM0872, insert domain"/>
    <property type="match status" value="1"/>
</dbReference>
<dbReference type="Gene3D" id="3.40.50.150">
    <property type="entry name" value="Vaccinia Virus protein VP39"/>
    <property type="match status" value="1"/>
</dbReference>
<dbReference type="HAMAP" id="MF_01007">
    <property type="entry name" value="16SrRNA_methyltr_H"/>
    <property type="match status" value="1"/>
</dbReference>
<dbReference type="InterPro" id="IPR002903">
    <property type="entry name" value="RsmH"/>
</dbReference>
<dbReference type="InterPro" id="IPR023397">
    <property type="entry name" value="SAM-dep_MeTrfase_MraW_recog"/>
</dbReference>
<dbReference type="InterPro" id="IPR029063">
    <property type="entry name" value="SAM-dependent_MTases_sf"/>
</dbReference>
<dbReference type="NCBIfam" id="TIGR00006">
    <property type="entry name" value="16S rRNA (cytosine(1402)-N(4))-methyltransferase RsmH"/>
    <property type="match status" value="1"/>
</dbReference>
<dbReference type="PANTHER" id="PTHR11265:SF0">
    <property type="entry name" value="12S RRNA N4-METHYLCYTIDINE METHYLTRANSFERASE"/>
    <property type="match status" value="1"/>
</dbReference>
<dbReference type="PANTHER" id="PTHR11265">
    <property type="entry name" value="S-ADENOSYL-METHYLTRANSFERASE MRAW"/>
    <property type="match status" value="1"/>
</dbReference>
<dbReference type="Pfam" id="PF01795">
    <property type="entry name" value="Methyltransf_5"/>
    <property type="match status" value="1"/>
</dbReference>
<dbReference type="PIRSF" id="PIRSF004486">
    <property type="entry name" value="MraW"/>
    <property type="match status" value="1"/>
</dbReference>
<dbReference type="SUPFAM" id="SSF81799">
    <property type="entry name" value="Putative methyltransferase TM0872, insert domain"/>
    <property type="match status" value="1"/>
</dbReference>
<dbReference type="SUPFAM" id="SSF53335">
    <property type="entry name" value="S-adenosyl-L-methionine-dependent methyltransferases"/>
    <property type="match status" value="1"/>
</dbReference>
<organism>
    <name type="scientific">Maridesulfovibrio salexigens (strain ATCC 14822 / DSM 2638 / NCIMB 8403 / VKM B-1763)</name>
    <name type="common">Desulfovibrio salexigens</name>
    <dbReference type="NCBI Taxonomy" id="526222"/>
    <lineage>
        <taxon>Bacteria</taxon>
        <taxon>Pseudomonadati</taxon>
        <taxon>Thermodesulfobacteriota</taxon>
        <taxon>Desulfovibrionia</taxon>
        <taxon>Desulfovibrionales</taxon>
        <taxon>Desulfovibrionaceae</taxon>
        <taxon>Maridesulfovibrio</taxon>
    </lineage>
</organism>
<gene>
    <name evidence="1" type="primary">rsmH</name>
    <name type="synonym">mraW</name>
    <name type="ordered locus">Desal_0699</name>
</gene>
<feature type="chain" id="PRO_0000386853" description="Ribosomal RNA small subunit methyltransferase H">
    <location>
        <begin position="1"/>
        <end position="324"/>
    </location>
</feature>
<feature type="region of interest" description="Disordered" evidence="2">
    <location>
        <begin position="301"/>
        <end position="324"/>
    </location>
</feature>
<feature type="compositionally biased region" description="Basic and acidic residues" evidence="2">
    <location>
        <begin position="315"/>
        <end position="324"/>
    </location>
</feature>
<feature type="binding site" evidence="1">
    <location>
        <begin position="40"/>
        <end position="42"/>
    </location>
    <ligand>
        <name>S-adenosyl-L-methionine</name>
        <dbReference type="ChEBI" id="CHEBI:59789"/>
    </ligand>
</feature>
<feature type="binding site" evidence="1">
    <location>
        <position position="60"/>
    </location>
    <ligand>
        <name>S-adenosyl-L-methionine</name>
        <dbReference type="ChEBI" id="CHEBI:59789"/>
    </ligand>
</feature>
<feature type="binding site" evidence="1">
    <location>
        <position position="94"/>
    </location>
    <ligand>
        <name>S-adenosyl-L-methionine</name>
        <dbReference type="ChEBI" id="CHEBI:59789"/>
    </ligand>
</feature>
<feature type="binding site" evidence="1">
    <location>
        <position position="108"/>
    </location>
    <ligand>
        <name>S-adenosyl-L-methionine</name>
        <dbReference type="ChEBI" id="CHEBI:59789"/>
    </ligand>
</feature>
<feature type="binding site" evidence="1">
    <location>
        <position position="115"/>
    </location>
    <ligand>
        <name>S-adenosyl-L-methionine</name>
        <dbReference type="ChEBI" id="CHEBI:59789"/>
    </ligand>
</feature>
<evidence type="ECO:0000255" key="1">
    <source>
        <dbReference type="HAMAP-Rule" id="MF_01007"/>
    </source>
</evidence>
<evidence type="ECO:0000256" key="2">
    <source>
        <dbReference type="SAM" id="MobiDB-lite"/>
    </source>
</evidence>
<name>RSMH_MARSD</name>
<accession>C6BYH4</accession>
<protein>
    <recommendedName>
        <fullName evidence="1">Ribosomal RNA small subunit methyltransferase H</fullName>
        <ecNumber evidence="1">2.1.1.199</ecNumber>
    </recommendedName>
    <alternativeName>
        <fullName evidence="1">16S rRNA m(4)C1402 methyltransferase</fullName>
    </alternativeName>
    <alternativeName>
        <fullName evidence="1">rRNA (cytosine-N(4)-)-methyltransferase RsmH</fullName>
    </alternativeName>
</protein>